<dbReference type="EMBL" id="DS026990">
    <property type="protein sequence ID" value="EAW15245.1"/>
    <property type="status" value="ALT_INIT"/>
    <property type="molecule type" value="Genomic_DNA"/>
</dbReference>
<dbReference type="RefSeq" id="XP_001276671.1">
    <property type="nucleotide sequence ID" value="XM_001276670.1"/>
</dbReference>
<dbReference type="SMR" id="A1C4A5"/>
<dbReference type="STRING" id="344612.A1C4A5"/>
<dbReference type="EnsemblFungi" id="EAW15245">
    <property type="protein sequence ID" value="EAW15245"/>
    <property type="gene ID" value="ACLA_059080"/>
</dbReference>
<dbReference type="GeneID" id="4708852"/>
<dbReference type="KEGG" id="act:ACLA_059080"/>
<dbReference type="eggNOG" id="KOG0162">
    <property type="taxonomic scope" value="Eukaryota"/>
</dbReference>
<dbReference type="OrthoDB" id="6108017at2759"/>
<dbReference type="Proteomes" id="UP000006701">
    <property type="component" value="Unassembled WGS sequence"/>
</dbReference>
<dbReference type="GO" id="GO:0030479">
    <property type="term" value="C:actin cortical patch"/>
    <property type="evidence" value="ECO:0007669"/>
    <property type="project" value="UniProtKB-SubCell"/>
</dbReference>
<dbReference type="GO" id="GO:0051285">
    <property type="term" value="C:cell cortex of cell tip"/>
    <property type="evidence" value="ECO:0007669"/>
    <property type="project" value="EnsemblFungi"/>
</dbReference>
<dbReference type="GO" id="GO:0043332">
    <property type="term" value="C:mating projection tip"/>
    <property type="evidence" value="ECO:0007669"/>
    <property type="project" value="EnsemblFungi"/>
</dbReference>
<dbReference type="GO" id="GO:0031097">
    <property type="term" value="C:medial cortex"/>
    <property type="evidence" value="ECO:0007669"/>
    <property type="project" value="EnsemblFungi"/>
</dbReference>
<dbReference type="GO" id="GO:0045160">
    <property type="term" value="C:myosin I complex"/>
    <property type="evidence" value="ECO:0007669"/>
    <property type="project" value="EnsemblFungi"/>
</dbReference>
<dbReference type="GO" id="GO:0044853">
    <property type="term" value="C:plasma membrane raft"/>
    <property type="evidence" value="ECO:0007669"/>
    <property type="project" value="EnsemblFungi"/>
</dbReference>
<dbReference type="GO" id="GO:0005628">
    <property type="term" value="C:prospore membrane"/>
    <property type="evidence" value="ECO:0007669"/>
    <property type="project" value="EnsemblFungi"/>
</dbReference>
<dbReference type="GO" id="GO:0051015">
    <property type="term" value="F:actin filament binding"/>
    <property type="evidence" value="ECO:0007669"/>
    <property type="project" value="EnsemblFungi"/>
</dbReference>
<dbReference type="GO" id="GO:0071933">
    <property type="term" value="F:Arp2/3 complex binding"/>
    <property type="evidence" value="ECO:0007669"/>
    <property type="project" value="EnsemblFungi"/>
</dbReference>
<dbReference type="GO" id="GO:0005524">
    <property type="term" value="F:ATP binding"/>
    <property type="evidence" value="ECO:0007669"/>
    <property type="project" value="UniProtKB-KW"/>
</dbReference>
<dbReference type="GO" id="GO:0016787">
    <property type="term" value="F:hydrolase activity"/>
    <property type="evidence" value="ECO:0007669"/>
    <property type="project" value="UniProtKB-KW"/>
</dbReference>
<dbReference type="GO" id="GO:0000146">
    <property type="term" value="F:microfilament motor activity"/>
    <property type="evidence" value="ECO:0007669"/>
    <property type="project" value="EnsemblFungi"/>
</dbReference>
<dbReference type="GO" id="GO:0000147">
    <property type="term" value="P:actin cortical patch assembly"/>
    <property type="evidence" value="ECO:0007669"/>
    <property type="project" value="EnsemblFungi"/>
</dbReference>
<dbReference type="GO" id="GO:0051666">
    <property type="term" value="P:actin cortical patch localization"/>
    <property type="evidence" value="ECO:0007669"/>
    <property type="project" value="TreeGrafter"/>
</dbReference>
<dbReference type="GO" id="GO:0007015">
    <property type="term" value="P:actin filament organization"/>
    <property type="evidence" value="ECO:0007669"/>
    <property type="project" value="TreeGrafter"/>
</dbReference>
<dbReference type="GO" id="GO:0006897">
    <property type="term" value="P:endocytosis"/>
    <property type="evidence" value="ECO:0007669"/>
    <property type="project" value="EnsemblFungi"/>
</dbReference>
<dbReference type="GO" id="GO:0000281">
    <property type="term" value="P:mitotic cytokinesis"/>
    <property type="evidence" value="ECO:0007669"/>
    <property type="project" value="EnsemblFungi"/>
</dbReference>
<dbReference type="CDD" id="cd01378">
    <property type="entry name" value="MYSc_Myo1"/>
    <property type="match status" value="1"/>
</dbReference>
<dbReference type="CDD" id="cd11858">
    <property type="entry name" value="SH3_Myosin-I_fungi"/>
    <property type="match status" value="1"/>
</dbReference>
<dbReference type="FunFam" id="1.10.10.820:FF:000001">
    <property type="entry name" value="Myosin heavy chain"/>
    <property type="match status" value="1"/>
</dbReference>
<dbReference type="FunFam" id="1.20.120.720:FF:000015">
    <property type="entry name" value="Myosin I"/>
    <property type="match status" value="1"/>
</dbReference>
<dbReference type="FunFam" id="2.30.30.40:FF:000254">
    <property type="entry name" value="Myosin I MyoA/Myo5"/>
    <property type="match status" value="1"/>
</dbReference>
<dbReference type="FunFam" id="1.20.5.4820:FF:000004">
    <property type="entry name" value="Myosin IE"/>
    <property type="match status" value="1"/>
</dbReference>
<dbReference type="FunFam" id="1.20.58.530:FF:000007">
    <property type="entry name" value="Myosin IE"/>
    <property type="match status" value="1"/>
</dbReference>
<dbReference type="Gene3D" id="1.10.10.820">
    <property type="match status" value="1"/>
</dbReference>
<dbReference type="Gene3D" id="1.20.5.4820">
    <property type="match status" value="1"/>
</dbReference>
<dbReference type="Gene3D" id="1.20.58.530">
    <property type="match status" value="1"/>
</dbReference>
<dbReference type="Gene3D" id="3.40.850.10">
    <property type="entry name" value="Kinesin motor domain"/>
    <property type="match status" value="1"/>
</dbReference>
<dbReference type="Gene3D" id="1.20.120.720">
    <property type="entry name" value="Myosin VI head, motor domain, U50 subdomain"/>
    <property type="match status" value="1"/>
</dbReference>
<dbReference type="Gene3D" id="2.30.30.40">
    <property type="entry name" value="SH3 Domains"/>
    <property type="match status" value="1"/>
</dbReference>
<dbReference type="InterPro" id="IPR035535">
    <property type="entry name" value="Fungal_myosin-I_SH3"/>
</dbReference>
<dbReference type="InterPro" id="IPR036961">
    <property type="entry name" value="Kinesin_motor_dom_sf"/>
</dbReference>
<dbReference type="InterPro" id="IPR054489">
    <property type="entry name" value="Myo1_CA"/>
</dbReference>
<dbReference type="InterPro" id="IPR001609">
    <property type="entry name" value="Myosin_head_motor_dom-like"/>
</dbReference>
<dbReference type="InterPro" id="IPR010926">
    <property type="entry name" value="Myosin_TH1"/>
</dbReference>
<dbReference type="InterPro" id="IPR036072">
    <property type="entry name" value="MYSc_Myo1"/>
</dbReference>
<dbReference type="InterPro" id="IPR027417">
    <property type="entry name" value="P-loop_NTPase"/>
</dbReference>
<dbReference type="InterPro" id="IPR036028">
    <property type="entry name" value="SH3-like_dom_sf"/>
</dbReference>
<dbReference type="InterPro" id="IPR001452">
    <property type="entry name" value="SH3_domain"/>
</dbReference>
<dbReference type="PANTHER" id="PTHR13140">
    <property type="entry name" value="MYOSIN"/>
    <property type="match status" value="1"/>
</dbReference>
<dbReference type="PANTHER" id="PTHR13140:SF837">
    <property type="entry name" value="MYOSIN-3-RELATED"/>
    <property type="match status" value="1"/>
</dbReference>
<dbReference type="Pfam" id="PF22773">
    <property type="entry name" value="Myo1_CA"/>
    <property type="match status" value="1"/>
</dbReference>
<dbReference type="Pfam" id="PF00063">
    <property type="entry name" value="Myosin_head"/>
    <property type="match status" value="1"/>
</dbReference>
<dbReference type="Pfam" id="PF06017">
    <property type="entry name" value="Myosin_TH1"/>
    <property type="match status" value="1"/>
</dbReference>
<dbReference type="Pfam" id="PF00018">
    <property type="entry name" value="SH3_1"/>
    <property type="match status" value="1"/>
</dbReference>
<dbReference type="PRINTS" id="PR00193">
    <property type="entry name" value="MYOSINHEAVY"/>
</dbReference>
<dbReference type="SMART" id="SM00242">
    <property type="entry name" value="MYSc"/>
    <property type="match status" value="1"/>
</dbReference>
<dbReference type="SMART" id="SM00326">
    <property type="entry name" value="SH3"/>
    <property type="match status" value="1"/>
</dbReference>
<dbReference type="SUPFAM" id="SSF52540">
    <property type="entry name" value="P-loop containing nucleoside triphosphate hydrolases"/>
    <property type="match status" value="1"/>
</dbReference>
<dbReference type="SUPFAM" id="SSF50044">
    <property type="entry name" value="SH3-domain"/>
    <property type="match status" value="1"/>
</dbReference>
<dbReference type="PROSITE" id="PS51456">
    <property type="entry name" value="MYOSIN_MOTOR"/>
    <property type="match status" value="1"/>
</dbReference>
<dbReference type="PROSITE" id="PS50002">
    <property type="entry name" value="SH3"/>
    <property type="match status" value="1"/>
</dbReference>
<dbReference type="PROSITE" id="PS51757">
    <property type="entry name" value="TH1"/>
    <property type="match status" value="1"/>
</dbReference>
<name>MYO1_ASPCL</name>
<evidence type="ECO:0000250" key="1"/>
<evidence type="ECO:0000255" key="2"/>
<evidence type="ECO:0000255" key="3">
    <source>
        <dbReference type="PROSITE-ProRule" id="PRU00192"/>
    </source>
</evidence>
<evidence type="ECO:0000255" key="4">
    <source>
        <dbReference type="PROSITE-ProRule" id="PRU00782"/>
    </source>
</evidence>
<evidence type="ECO:0000255" key="5">
    <source>
        <dbReference type="PROSITE-ProRule" id="PRU01093"/>
    </source>
</evidence>
<evidence type="ECO:0000256" key="6">
    <source>
        <dbReference type="SAM" id="MobiDB-lite"/>
    </source>
</evidence>
<evidence type="ECO:0000305" key="7"/>
<keyword id="KW-0009">Actin-binding</keyword>
<keyword id="KW-0067">ATP-binding</keyword>
<keyword id="KW-0963">Cytoplasm</keyword>
<keyword id="KW-0206">Cytoskeleton</keyword>
<keyword id="KW-0378">Hydrolase</keyword>
<keyword id="KW-0505">Motor protein</keyword>
<keyword id="KW-0518">Myosin</keyword>
<keyword id="KW-0547">Nucleotide-binding</keyword>
<keyword id="KW-0597">Phosphoprotein</keyword>
<keyword id="KW-1185">Reference proteome</keyword>
<keyword id="KW-0677">Repeat</keyword>
<keyword id="KW-0728">SH3 domain</keyword>
<accession>A1C4A5</accession>
<gene>
    <name type="primary">myoA</name>
    <name type="ORF">ACLA_059080</name>
</gene>
<proteinExistence type="inferred from homology"/>
<organism>
    <name type="scientific">Aspergillus clavatus (strain ATCC 1007 / CBS 513.65 / DSM 816 / NCTC 3887 / NRRL 1 / QM 1276 / 107)</name>
    <dbReference type="NCBI Taxonomy" id="344612"/>
    <lineage>
        <taxon>Eukaryota</taxon>
        <taxon>Fungi</taxon>
        <taxon>Dikarya</taxon>
        <taxon>Ascomycota</taxon>
        <taxon>Pezizomycotina</taxon>
        <taxon>Eurotiomycetes</taxon>
        <taxon>Eurotiomycetidae</taxon>
        <taxon>Eurotiales</taxon>
        <taxon>Aspergillaceae</taxon>
        <taxon>Aspergillus</taxon>
        <taxon>Aspergillus subgen. Fumigati</taxon>
    </lineage>
</organism>
<sequence length="1253" mass="137388">MGHSRRPVGGEKKSRGFGRSKAAADVGDGRQAGKPQVKKAVFESTKKKEIGVSDLTLLSKISNEAINDNLKLRFEHDEIYTYIGHVLVSVNPFRDLGIYTDNVLESYRGKNRLEVPPHVFAVAESAYYNMKSYKDNQCVIISGESGAGKTEAAKRIMQYIASVSGGTDSSIQQIKEMVLATNPLLESFGNAKTLRNNNSSRFGKYLELEFNTNGEPVGANITNYLLEKSRVVGQITNERNFHIFYQFTKAAPQKYRDMFGIQQPQSYLYTSRSKCYDVPGIDDSAEFRDTVNAMNVIGMTESEQDNVFRMLAAILWIGNVQFAEDDSGNAAITDQSVVDFIAYLLEVDAAQVNKAFTIRVMETARGGRRGSIYEVPLNTVQALAVRDALAKAIYFNLFDWIVQRVNSSLAARGEIANSIGILDIYGFEIFEKNSFEQLCINYVNEKLQQIFIQLTLKAEQDEYAREQIQWTPIKYFDNKVVCSLIEDKRPPGVFAALNDACATAHADSGAADNTFVGRLNFLSQNPNFENRQGQFIVKHYAGDVSYAVTGMTDKNKDQLLKDLLNLVGSSGNQFVHTLFPEQVNQDDKRRPPTASDKIKASANDLVATLMKAQPSYIRTIKPNDNKAPREYNVGNVLHQIKYLGLQENVRIRRAGFAYRQTFDKFVERFYLLSPKTSYAGDYTWTGSAESGARQILKDTSIPAEEYQMGITKVFVKTPETLFALEAMRDRYWHNMAIRIQRAWRNYLRYRIECATRIQRFWRRTTGGLEFIKLRDQGHQLLNGRKERRRMSLLGSRRFLGDYIGVGNKGGPGEMVRNGAGISGSEDILFSCRGEVLVSKFGRSSKPAPRILVLTNRHIYIIAQNILNNQLVISSERTIPIGAIKAISASNLKDDWFSIVVGSAQEPDPLLSCVFKTELFTHLNNALRGQLNLKIADHIEYSKKPGKMATVKVVKDPAVTGDDTYKSSTIHTGAGEPASSVSKPTPRPKPVSARPVTKGKLLRPGGPGGGPSKLASRPTPAAQPLPRATPQPAAAQPAAPQPAARVVPQPVAAVAASHARTGSTASVRAPPPPPPAAAPAPKKPTAKALYDFNSQQPNELSIKAGEIVQIVSKEGNGWWLCMNMATSSQGWTPEAYLEEQVAPAPKPTPPPPPPAAPRSTPTPVNGAAAAAKAKPAPPAPPAKRPNMAGRKAVPAPPPAPRDSAVSMNSHDSSGGSGRGTPNSASNASLAGGLAEALRARQHAMQGKNDDDDDW</sequence>
<comment type="function">
    <text evidence="1">Type-I myosin implicated in the organization of the actin cytoskeleton. Required for proper actin cytoskeleton polarization. At the cell cortex, assembles in patch-like structures together with proteins from the actin-polymerizing machinery and promotes actin assembly. Functions as actin nucleation-promoting factor (NPF) for the Arp2/3 complex. Plays an important role in polarized growth, spore germination, hyphal morphogenesis, and septal wall formation (By similarity).</text>
</comment>
<comment type="subcellular location">
    <subcellularLocation>
        <location evidence="1">Cytoplasm</location>
        <location evidence="1">Cytoskeleton</location>
        <location evidence="1">Actin patch</location>
    </subcellularLocation>
    <text evidence="1">Localizes to cortical patch-like structures. Enriched at sites of polarized growth, like the growing hyphal tips and sites of septum formation (By similarity).</text>
</comment>
<comment type="domain">
    <text evidence="1">The myosin motor domain displays actin-stimulated ATPase activity and generates a mechanochemical force.</text>
</comment>
<comment type="domain">
    <text evidence="1">The tail domain participates in molecular interactions that specify the role of the motor domain (By similarity). It is composed of several tail homology (TH) domains, namely a putative phospholipid-binding myosin tail domain (also named TH1), an Ala- and Pro-rich domain (TH2), followed by an SH3 domain and a C-terminal acidic domain (TH3).</text>
</comment>
<comment type="PTM">
    <text evidence="1">Phosphorylation of the TEDS site (Ser-371) is required for the polarization of the actin cytoskeleton. Phosphorylation probably activates the myosin-I ATPase activity (By similarity).</text>
</comment>
<comment type="similarity">
    <text evidence="7">Belongs to the TRAFAC class myosin-kinesin ATPase superfamily. Myosin family.</text>
</comment>
<comment type="sequence caution" evidence="7">
    <conflict type="erroneous initiation">
        <sequence resource="EMBL-CDS" id="EAW15245"/>
    </conflict>
</comment>
<feature type="chain" id="PRO_0000338536" description="Myosin-1">
    <location>
        <begin position="1"/>
        <end position="1253"/>
    </location>
</feature>
<feature type="domain" description="Myosin motor" evidence="4">
    <location>
        <begin position="50"/>
        <end position="729"/>
    </location>
</feature>
<feature type="domain" description="IQ 1">
    <location>
        <begin position="733"/>
        <end position="753"/>
    </location>
</feature>
<feature type="domain" description="IQ 2">
    <location>
        <begin position="754"/>
        <end position="779"/>
    </location>
</feature>
<feature type="domain" description="TH1" evidence="5">
    <location>
        <begin position="787"/>
        <end position="977"/>
    </location>
</feature>
<feature type="domain" description="SH3" evidence="3">
    <location>
        <begin position="1080"/>
        <end position="1141"/>
    </location>
</feature>
<feature type="region of interest" description="Disordered" evidence="6">
    <location>
        <begin position="1"/>
        <end position="40"/>
    </location>
</feature>
<feature type="region of interest" description="Actin-binding" evidence="1">
    <location>
        <begin position="418"/>
        <end position="500"/>
    </location>
</feature>
<feature type="region of interest" description="Disordered" evidence="6">
    <location>
        <begin position="959"/>
        <end position="1083"/>
    </location>
</feature>
<feature type="region of interest" description="Disordered" evidence="6">
    <location>
        <begin position="1139"/>
        <end position="1253"/>
    </location>
</feature>
<feature type="compositionally biased region" description="Low complexity" evidence="6">
    <location>
        <begin position="1029"/>
        <end position="1055"/>
    </location>
</feature>
<feature type="compositionally biased region" description="Pro residues" evidence="6">
    <location>
        <begin position="1068"/>
        <end position="1081"/>
    </location>
</feature>
<feature type="compositionally biased region" description="Pro residues" evidence="6">
    <location>
        <begin position="1143"/>
        <end position="1155"/>
    </location>
</feature>
<feature type="compositionally biased region" description="Low complexity" evidence="6">
    <location>
        <begin position="1156"/>
        <end position="1173"/>
    </location>
</feature>
<feature type="compositionally biased region" description="Low complexity" evidence="6">
    <location>
        <begin position="1221"/>
        <end position="1235"/>
    </location>
</feature>
<feature type="binding site" evidence="2">
    <location>
        <begin position="143"/>
        <end position="150"/>
    </location>
    <ligand>
        <name>ATP</name>
        <dbReference type="ChEBI" id="CHEBI:30616"/>
    </ligand>
</feature>
<feature type="modified residue" description="Phosphoserine" evidence="1">
    <location>
        <position position="371"/>
    </location>
</feature>
<protein>
    <recommendedName>
        <fullName>Myosin-1</fullName>
    </recommendedName>
    <alternativeName>
        <fullName>Class I unconventional myosin</fullName>
    </alternativeName>
    <alternativeName>
        <fullName>Type I myosin</fullName>
    </alternativeName>
</protein>
<reference key="1">
    <citation type="journal article" date="2008" name="PLoS Genet.">
        <title>Genomic islands in the pathogenic filamentous fungus Aspergillus fumigatus.</title>
        <authorList>
            <person name="Fedorova N.D."/>
            <person name="Khaldi N."/>
            <person name="Joardar V.S."/>
            <person name="Maiti R."/>
            <person name="Amedeo P."/>
            <person name="Anderson M.J."/>
            <person name="Crabtree J."/>
            <person name="Silva J.C."/>
            <person name="Badger J.H."/>
            <person name="Albarraq A."/>
            <person name="Angiuoli S."/>
            <person name="Bussey H."/>
            <person name="Bowyer P."/>
            <person name="Cotty P.J."/>
            <person name="Dyer P.S."/>
            <person name="Egan A."/>
            <person name="Galens K."/>
            <person name="Fraser-Liggett C.M."/>
            <person name="Haas B.J."/>
            <person name="Inman J.M."/>
            <person name="Kent R."/>
            <person name="Lemieux S."/>
            <person name="Malavazi I."/>
            <person name="Orvis J."/>
            <person name="Roemer T."/>
            <person name="Ronning C.M."/>
            <person name="Sundaram J.P."/>
            <person name="Sutton G."/>
            <person name="Turner G."/>
            <person name="Venter J.C."/>
            <person name="White O.R."/>
            <person name="Whitty B.R."/>
            <person name="Youngman P."/>
            <person name="Wolfe K.H."/>
            <person name="Goldman G.H."/>
            <person name="Wortman J.R."/>
            <person name="Jiang B."/>
            <person name="Denning D.W."/>
            <person name="Nierman W.C."/>
        </authorList>
    </citation>
    <scope>NUCLEOTIDE SEQUENCE [LARGE SCALE GENOMIC DNA]</scope>
    <source>
        <strain>ATCC 1007 / CBS 513.65 / DSM 816 / NCTC 3887 / NRRL 1 / QM 1276 / 107</strain>
    </source>
</reference>